<comment type="function">
    <text evidence="1">Catalyzes the decarboxylation of four acetate groups of uroporphyrinogen-III to yield coproporphyrinogen-III.</text>
</comment>
<comment type="catalytic activity">
    <reaction evidence="1">
        <text>uroporphyrinogen III + 4 H(+) = coproporphyrinogen III + 4 CO2</text>
        <dbReference type="Rhea" id="RHEA:19865"/>
        <dbReference type="ChEBI" id="CHEBI:15378"/>
        <dbReference type="ChEBI" id="CHEBI:16526"/>
        <dbReference type="ChEBI" id="CHEBI:57308"/>
        <dbReference type="ChEBI" id="CHEBI:57309"/>
        <dbReference type="EC" id="4.1.1.37"/>
    </reaction>
</comment>
<comment type="pathway">
    <text evidence="1">Porphyrin-containing compound metabolism; protoporphyrin-IX biosynthesis; coproporphyrinogen-III from 5-aminolevulinate: step 4/4.</text>
</comment>
<comment type="subunit">
    <text evidence="1">Homodimer.</text>
</comment>
<comment type="subcellular location">
    <subcellularLocation>
        <location evidence="1">Cytoplasm</location>
    </subcellularLocation>
</comment>
<comment type="similarity">
    <text evidence="1">Belongs to the uroporphyrinogen decarboxylase family.</text>
</comment>
<proteinExistence type="inferred from homology"/>
<keyword id="KW-0963">Cytoplasm</keyword>
<keyword id="KW-0210">Decarboxylase</keyword>
<keyword id="KW-0456">Lyase</keyword>
<keyword id="KW-0627">Porphyrin biosynthesis</keyword>
<keyword id="KW-1185">Reference proteome</keyword>
<accession>Q7N960</accession>
<protein>
    <recommendedName>
        <fullName evidence="1">Uroporphyrinogen decarboxylase</fullName>
        <shortName evidence="1">UPD</shortName>
        <shortName evidence="1">URO-D</shortName>
        <ecNumber evidence="1">4.1.1.37</ecNumber>
    </recommendedName>
</protein>
<name>DCUP_PHOLL</name>
<sequence length="354" mass="39153">MNALKNDRYLRALLRQSVDVTPVWMMRQAGRYLPEYQATRAKAGDFIALCKNTELACEVTLQPLQRYPLDAAILFSDILTIPDAMGLGLYFEAGEGPRFKSPVFSRADVEKLPVPDPEMELSYVTDAVRAIRKALAGQVPLIGFSGSPWTLATYMVEGGSSKAFTKIKKMMYAEPTVMHLLLDKLADSVILYLNAQIKAGAQSVMVFDTWGGVLTGRDYREFSLHYMHKIVDGLIRENEGRRVPVTLFAKGGGQWLEAMAETGCDALGLDWTTDIADARRRVGNKVALQGNMDPSMLYASPERIEQEVSTILQGFGTGSGHVFNLGHGIHQDILPEHAGVFVEAVHKLSAKYHQ</sequence>
<evidence type="ECO:0000255" key="1">
    <source>
        <dbReference type="HAMAP-Rule" id="MF_00218"/>
    </source>
</evidence>
<gene>
    <name evidence="1" type="primary">hemE</name>
    <name type="ordered locus">plu0489</name>
</gene>
<reference key="1">
    <citation type="journal article" date="2003" name="Nat. Biotechnol.">
        <title>The genome sequence of the entomopathogenic bacterium Photorhabdus luminescens.</title>
        <authorList>
            <person name="Duchaud E."/>
            <person name="Rusniok C."/>
            <person name="Frangeul L."/>
            <person name="Buchrieser C."/>
            <person name="Givaudan A."/>
            <person name="Taourit S."/>
            <person name="Bocs S."/>
            <person name="Boursaux-Eude C."/>
            <person name="Chandler M."/>
            <person name="Charles J.-F."/>
            <person name="Dassa E."/>
            <person name="Derose R."/>
            <person name="Derzelle S."/>
            <person name="Freyssinet G."/>
            <person name="Gaudriault S."/>
            <person name="Medigue C."/>
            <person name="Lanois A."/>
            <person name="Powell K."/>
            <person name="Siguier P."/>
            <person name="Vincent R."/>
            <person name="Wingate V."/>
            <person name="Zouine M."/>
            <person name="Glaser P."/>
            <person name="Boemare N."/>
            <person name="Danchin A."/>
            <person name="Kunst F."/>
        </authorList>
    </citation>
    <scope>NUCLEOTIDE SEQUENCE [LARGE SCALE GENOMIC DNA]</scope>
    <source>
        <strain>DSM 15139 / CIP 105565 / TT01</strain>
    </source>
</reference>
<organism>
    <name type="scientific">Photorhabdus laumondii subsp. laumondii (strain DSM 15139 / CIP 105565 / TT01)</name>
    <name type="common">Photorhabdus luminescens subsp. laumondii</name>
    <dbReference type="NCBI Taxonomy" id="243265"/>
    <lineage>
        <taxon>Bacteria</taxon>
        <taxon>Pseudomonadati</taxon>
        <taxon>Pseudomonadota</taxon>
        <taxon>Gammaproteobacteria</taxon>
        <taxon>Enterobacterales</taxon>
        <taxon>Morganellaceae</taxon>
        <taxon>Photorhabdus</taxon>
    </lineage>
</organism>
<dbReference type="EC" id="4.1.1.37" evidence="1"/>
<dbReference type="EMBL" id="BX571860">
    <property type="protein sequence ID" value="CAE12784.1"/>
    <property type="molecule type" value="Genomic_DNA"/>
</dbReference>
<dbReference type="RefSeq" id="WP_011144874.1">
    <property type="nucleotide sequence ID" value="NC_005126.1"/>
</dbReference>
<dbReference type="SMR" id="Q7N960"/>
<dbReference type="STRING" id="243265.plu0489"/>
<dbReference type="GeneID" id="48846774"/>
<dbReference type="KEGG" id="plu:plu0489"/>
<dbReference type="eggNOG" id="COG0407">
    <property type="taxonomic scope" value="Bacteria"/>
</dbReference>
<dbReference type="HOGENOM" id="CLU_040933_0_0_6"/>
<dbReference type="OrthoDB" id="9806656at2"/>
<dbReference type="UniPathway" id="UPA00251">
    <property type="reaction ID" value="UER00321"/>
</dbReference>
<dbReference type="Proteomes" id="UP000002514">
    <property type="component" value="Chromosome"/>
</dbReference>
<dbReference type="GO" id="GO:0005829">
    <property type="term" value="C:cytosol"/>
    <property type="evidence" value="ECO:0007669"/>
    <property type="project" value="TreeGrafter"/>
</dbReference>
<dbReference type="GO" id="GO:0004853">
    <property type="term" value="F:uroporphyrinogen decarboxylase activity"/>
    <property type="evidence" value="ECO:0007669"/>
    <property type="project" value="UniProtKB-UniRule"/>
</dbReference>
<dbReference type="GO" id="GO:0019353">
    <property type="term" value="P:protoporphyrinogen IX biosynthetic process from glutamate"/>
    <property type="evidence" value="ECO:0007669"/>
    <property type="project" value="TreeGrafter"/>
</dbReference>
<dbReference type="CDD" id="cd00717">
    <property type="entry name" value="URO-D"/>
    <property type="match status" value="1"/>
</dbReference>
<dbReference type="FunFam" id="3.20.20.210:FF:000001">
    <property type="entry name" value="Uroporphyrinogen decarboxylase"/>
    <property type="match status" value="1"/>
</dbReference>
<dbReference type="Gene3D" id="3.20.20.210">
    <property type="match status" value="1"/>
</dbReference>
<dbReference type="HAMAP" id="MF_00218">
    <property type="entry name" value="URO_D"/>
    <property type="match status" value="1"/>
</dbReference>
<dbReference type="InterPro" id="IPR038071">
    <property type="entry name" value="UROD/MetE-like_sf"/>
</dbReference>
<dbReference type="InterPro" id="IPR006361">
    <property type="entry name" value="Uroporphyrinogen_deCO2ase_HemE"/>
</dbReference>
<dbReference type="InterPro" id="IPR000257">
    <property type="entry name" value="Uroporphyrinogen_deCOase"/>
</dbReference>
<dbReference type="NCBIfam" id="TIGR01464">
    <property type="entry name" value="hemE"/>
    <property type="match status" value="1"/>
</dbReference>
<dbReference type="PANTHER" id="PTHR21091">
    <property type="entry name" value="METHYLTETRAHYDROFOLATE:HOMOCYSTEINE METHYLTRANSFERASE RELATED"/>
    <property type="match status" value="1"/>
</dbReference>
<dbReference type="PANTHER" id="PTHR21091:SF169">
    <property type="entry name" value="UROPORPHYRINOGEN DECARBOXYLASE"/>
    <property type="match status" value="1"/>
</dbReference>
<dbReference type="Pfam" id="PF01208">
    <property type="entry name" value="URO-D"/>
    <property type="match status" value="1"/>
</dbReference>
<dbReference type="SUPFAM" id="SSF51726">
    <property type="entry name" value="UROD/MetE-like"/>
    <property type="match status" value="1"/>
</dbReference>
<dbReference type="PROSITE" id="PS00906">
    <property type="entry name" value="UROD_1"/>
    <property type="match status" value="1"/>
</dbReference>
<dbReference type="PROSITE" id="PS00907">
    <property type="entry name" value="UROD_2"/>
    <property type="match status" value="1"/>
</dbReference>
<feature type="chain" id="PRO_0000187622" description="Uroporphyrinogen decarboxylase">
    <location>
        <begin position="1"/>
        <end position="354"/>
    </location>
</feature>
<feature type="binding site" evidence="1">
    <location>
        <begin position="27"/>
        <end position="31"/>
    </location>
    <ligand>
        <name>substrate</name>
    </ligand>
</feature>
<feature type="binding site" evidence="1">
    <location>
        <position position="46"/>
    </location>
    <ligand>
        <name>substrate</name>
    </ligand>
</feature>
<feature type="binding site" evidence="1">
    <location>
        <position position="77"/>
    </location>
    <ligand>
        <name>substrate</name>
    </ligand>
</feature>
<feature type="binding site" evidence="1">
    <location>
        <position position="154"/>
    </location>
    <ligand>
        <name>substrate</name>
    </ligand>
</feature>
<feature type="binding site" evidence="1">
    <location>
        <position position="209"/>
    </location>
    <ligand>
        <name>substrate</name>
    </ligand>
</feature>
<feature type="binding site" evidence="1">
    <location>
        <position position="327"/>
    </location>
    <ligand>
        <name>substrate</name>
    </ligand>
</feature>
<feature type="site" description="Transition state stabilizer" evidence="1">
    <location>
        <position position="77"/>
    </location>
</feature>